<organism>
    <name type="scientific">Francisella tularensis subsp. holarctica (strain FTNF002-00 / FTA)</name>
    <dbReference type="NCBI Taxonomy" id="458234"/>
    <lineage>
        <taxon>Bacteria</taxon>
        <taxon>Pseudomonadati</taxon>
        <taxon>Pseudomonadota</taxon>
        <taxon>Gammaproteobacteria</taxon>
        <taxon>Thiotrichales</taxon>
        <taxon>Francisellaceae</taxon>
        <taxon>Francisella</taxon>
    </lineage>
</organism>
<accession>A7NAH8</accession>
<proteinExistence type="inferred from homology"/>
<protein>
    <recommendedName>
        <fullName evidence="1">Probable glycine dehydrogenase (decarboxylating) subunit 1</fullName>
        <ecNumber evidence="1">1.4.4.2</ecNumber>
    </recommendedName>
    <alternativeName>
        <fullName evidence="1">Glycine cleavage system P-protein subunit 1</fullName>
    </alternativeName>
    <alternativeName>
        <fullName evidence="1">Glycine decarboxylase subunit 1</fullName>
    </alternativeName>
    <alternativeName>
        <fullName evidence="1">Glycine dehydrogenase (aminomethyl-transferring) subunit 1</fullName>
    </alternativeName>
</protein>
<evidence type="ECO:0000255" key="1">
    <source>
        <dbReference type="HAMAP-Rule" id="MF_00712"/>
    </source>
</evidence>
<dbReference type="EC" id="1.4.4.2" evidence="1"/>
<dbReference type="EMBL" id="CP000803">
    <property type="protein sequence ID" value="ABU60981.1"/>
    <property type="molecule type" value="Genomic_DNA"/>
</dbReference>
<dbReference type="RefSeq" id="WP_010030954.1">
    <property type="nucleotide sequence ID" value="NC_009749.1"/>
</dbReference>
<dbReference type="SMR" id="A7NAH8"/>
<dbReference type="KEGG" id="fta:FTA_0505"/>
<dbReference type="HOGENOM" id="CLU_004620_0_2_6"/>
<dbReference type="GO" id="GO:0004375">
    <property type="term" value="F:glycine dehydrogenase (decarboxylating) activity"/>
    <property type="evidence" value="ECO:0007669"/>
    <property type="project" value="UniProtKB-EC"/>
</dbReference>
<dbReference type="GO" id="GO:0019464">
    <property type="term" value="P:glycine decarboxylation via glycine cleavage system"/>
    <property type="evidence" value="ECO:0007669"/>
    <property type="project" value="UniProtKB-UniRule"/>
</dbReference>
<dbReference type="GO" id="GO:0009116">
    <property type="term" value="P:nucleoside metabolic process"/>
    <property type="evidence" value="ECO:0007669"/>
    <property type="project" value="InterPro"/>
</dbReference>
<dbReference type="CDD" id="cd00613">
    <property type="entry name" value="GDC-P"/>
    <property type="match status" value="1"/>
</dbReference>
<dbReference type="Gene3D" id="3.90.1150.10">
    <property type="entry name" value="Aspartate Aminotransferase, domain 1"/>
    <property type="match status" value="1"/>
</dbReference>
<dbReference type="Gene3D" id="3.40.640.10">
    <property type="entry name" value="Type I PLP-dependent aspartate aminotransferase-like (Major domain)"/>
    <property type="match status" value="1"/>
</dbReference>
<dbReference type="HAMAP" id="MF_00712">
    <property type="entry name" value="GcvPA"/>
    <property type="match status" value="1"/>
</dbReference>
<dbReference type="InterPro" id="IPR023010">
    <property type="entry name" value="GcvPA"/>
</dbReference>
<dbReference type="InterPro" id="IPR049315">
    <property type="entry name" value="GDC-P_N"/>
</dbReference>
<dbReference type="InterPro" id="IPR020581">
    <property type="entry name" value="GDC_P"/>
</dbReference>
<dbReference type="InterPro" id="IPR015424">
    <property type="entry name" value="PyrdxlP-dep_Trfase"/>
</dbReference>
<dbReference type="InterPro" id="IPR015421">
    <property type="entry name" value="PyrdxlP-dep_Trfase_major"/>
</dbReference>
<dbReference type="InterPro" id="IPR015422">
    <property type="entry name" value="PyrdxlP-dep_Trfase_small"/>
</dbReference>
<dbReference type="NCBIfam" id="NF001696">
    <property type="entry name" value="PRK00451.1"/>
    <property type="match status" value="1"/>
</dbReference>
<dbReference type="PANTHER" id="PTHR42806">
    <property type="entry name" value="GLYCINE CLEAVAGE SYSTEM P-PROTEIN"/>
    <property type="match status" value="1"/>
</dbReference>
<dbReference type="PANTHER" id="PTHR42806:SF1">
    <property type="entry name" value="GLYCINE DEHYDROGENASE (DECARBOXYLATING)"/>
    <property type="match status" value="1"/>
</dbReference>
<dbReference type="Pfam" id="PF02347">
    <property type="entry name" value="GDC-P"/>
    <property type="match status" value="1"/>
</dbReference>
<dbReference type="PIRSF" id="PIRSF006815">
    <property type="entry name" value="GcvPA"/>
    <property type="match status" value="1"/>
</dbReference>
<dbReference type="SUPFAM" id="SSF53383">
    <property type="entry name" value="PLP-dependent transferases"/>
    <property type="match status" value="1"/>
</dbReference>
<name>GCSPA_FRATF</name>
<keyword id="KW-0560">Oxidoreductase</keyword>
<feature type="chain" id="PRO_1000045650" description="Probable glycine dehydrogenase (decarboxylating) subunit 1">
    <location>
        <begin position="1"/>
        <end position="455"/>
    </location>
</feature>
<reference key="1">
    <citation type="journal article" date="2009" name="PLoS ONE">
        <title>Complete genome sequence of Francisella tularensis subspecies holarctica FTNF002-00.</title>
        <authorList>
            <person name="Barabote R.D."/>
            <person name="Xie G."/>
            <person name="Brettin T.S."/>
            <person name="Hinrichs S.H."/>
            <person name="Fey P.D."/>
            <person name="Jay J.J."/>
            <person name="Engle J.L."/>
            <person name="Godbole S.D."/>
            <person name="Noronha J.M."/>
            <person name="Scheuermann R.H."/>
            <person name="Zhou L.W."/>
            <person name="Lion C."/>
            <person name="Dempsey M.P."/>
        </authorList>
    </citation>
    <scope>NUCLEOTIDE SEQUENCE [LARGE SCALE GENOMIC DNA]</scope>
    <source>
        <strain>FTNF002-00 / FTA</strain>
    </source>
</reference>
<sequence>MSFIPHKLEQIKKMLDTIGASSVDQLFDEIPRHLRADTLNIKDGINEIQLANLMRKRANKNHHNINYIGAGAYSHHIPAAIWDIVARGEFYTAYTPYQAEASQGGLQVIYEFQTMMAGLTGMDASNASMYDGATALAESVLMAIRSNKKAKSQKVLIAEALHPTYLRVLETITKHQGIEFDIVNLDSKNGKTDVTKLEDFANTNYAAVVIQSPNFLGQLADVDGITNWAHKHGALVIAVTNPMSLAILKSPAEWGDNGADIVCGEGQPIGVPLASGGPYFGFMTCKMAHVRQMPGRIVGKTVDLDGNEGFCLTLQAREQHIRRAKATSNICTNQGLMVTAATIYMSLLGAEGLERVASISHENTQTLATELAKINGVSIRFNSAFFNEVVIDLPVNAETFVTEMEKEAIDAGYFLGEYHSDLANSIMVCATEIHTSEDIKEYIEATKKVLARIGG</sequence>
<comment type="function">
    <text evidence="1">The glycine cleavage system catalyzes the degradation of glycine. The P protein binds the alpha-amino group of glycine through its pyridoxal phosphate cofactor; CO(2) is released and the remaining methylamine moiety is then transferred to the lipoamide cofactor of the H protein.</text>
</comment>
<comment type="catalytic activity">
    <reaction evidence="1">
        <text>N(6)-[(R)-lipoyl]-L-lysyl-[glycine-cleavage complex H protein] + glycine + H(+) = N(6)-[(R)-S(8)-aminomethyldihydrolipoyl]-L-lysyl-[glycine-cleavage complex H protein] + CO2</text>
        <dbReference type="Rhea" id="RHEA:24304"/>
        <dbReference type="Rhea" id="RHEA-COMP:10494"/>
        <dbReference type="Rhea" id="RHEA-COMP:10495"/>
        <dbReference type="ChEBI" id="CHEBI:15378"/>
        <dbReference type="ChEBI" id="CHEBI:16526"/>
        <dbReference type="ChEBI" id="CHEBI:57305"/>
        <dbReference type="ChEBI" id="CHEBI:83099"/>
        <dbReference type="ChEBI" id="CHEBI:83143"/>
        <dbReference type="EC" id="1.4.4.2"/>
    </reaction>
</comment>
<comment type="subunit">
    <text evidence="1">The glycine cleavage system is composed of four proteins: P, T, L and H. In this organism, the P 'protein' is a heterodimer of two subunits.</text>
</comment>
<comment type="similarity">
    <text evidence="1">Belongs to the GcvP family. N-terminal subunit subfamily.</text>
</comment>
<gene>
    <name evidence="1" type="primary">gcvPA</name>
    <name type="ordered locus">FTA_0505</name>
</gene>